<evidence type="ECO:0000255" key="1">
    <source>
        <dbReference type="HAMAP-Rule" id="MF_01227"/>
    </source>
</evidence>
<evidence type="ECO:0000305" key="2"/>
<feature type="chain" id="PRO_0000266152" description="CTP synthase">
    <location>
        <begin position="1"/>
        <end position="542"/>
    </location>
</feature>
<feature type="domain" description="Glutamine amidotransferase type-1" evidence="1">
    <location>
        <begin position="291"/>
        <end position="541"/>
    </location>
</feature>
<feature type="region of interest" description="Amidoligase domain" evidence="1">
    <location>
        <begin position="1"/>
        <end position="265"/>
    </location>
</feature>
<feature type="active site" description="Nucleophile; for glutamine hydrolysis" evidence="1">
    <location>
        <position position="380"/>
    </location>
</feature>
<feature type="active site" evidence="1">
    <location>
        <position position="514"/>
    </location>
</feature>
<feature type="active site" evidence="1">
    <location>
        <position position="516"/>
    </location>
</feature>
<feature type="binding site" evidence="1">
    <location>
        <position position="13"/>
    </location>
    <ligand>
        <name>CTP</name>
        <dbReference type="ChEBI" id="CHEBI:37563"/>
        <note>allosteric inhibitor</note>
    </ligand>
</feature>
<feature type="binding site" evidence="1">
    <location>
        <position position="13"/>
    </location>
    <ligand>
        <name>UTP</name>
        <dbReference type="ChEBI" id="CHEBI:46398"/>
    </ligand>
</feature>
<feature type="binding site" evidence="1">
    <location>
        <begin position="14"/>
        <end position="19"/>
    </location>
    <ligand>
        <name>ATP</name>
        <dbReference type="ChEBI" id="CHEBI:30616"/>
    </ligand>
</feature>
<feature type="binding site" evidence="1">
    <location>
        <position position="54"/>
    </location>
    <ligand>
        <name>L-glutamine</name>
        <dbReference type="ChEBI" id="CHEBI:58359"/>
    </ligand>
</feature>
<feature type="binding site" evidence="1">
    <location>
        <position position="71"/>
    </location>
    <ligand>
        <name>ATP</name>
        <dbReference type="ChEBI" id="CHEBI:30616"/>
    </ligand>
</feature>
<feature type="binding site" evidence="1">
    <location>
        <position position="71"/>
    </location>
    <ligand>
        <name>Mg(2+)</name>
        <dbReference type="ChEBI" id="CHEBI:18420"/>
    </ligand>
</feature>
<feature type="binding site" evidence="1">
    <location>
        <position position="139"/>
    </location>
    <ligand>
        <name>Mg(2+)</name>
        <dbReference type="ChEBI" id="CHEBI:18420"/>
    </ligand>
</feature>
<feature type="binding site" evidence="1">
    <location>
        <begin position="146"/>
        <end position="148"/>
    </location>
    <ligand>
        <name>CTP</name>
        <dbReference type="ChEBI" id="CHEBI:37563"/>
        <note>allosteric inhibitor</note>
    </ligand>
</feature>
<feature type="binding site" evidence="1">
    <location>
        <begin position="186"/>
        <end position="191"/>
    </location>
    <ligand>
        <name>CTP</name>
        <dbReference type="ChEBI" id="CHEBI:37563"/>
        <note>allosteric inhibitor</note>
    </ligand>
</feature>
<feature type="binding site" evidence="1">
    <location>
        <begin position="186"/>
        <end position="191"/>
    </location>
    <ligand>
        <name>UTP</name>
        <dbReference type="ChEBI" id="CHEBI:46398"/>
    </ligand>
</feature>
<feature type="binding site" evidence="1">
    <location>
        <position position="222"/>
    </location>
    <ligand>
        <name>CTP</name>
        <dbReference type="ChEBI" id="CHEBI:37563"/>
        <note>allosteric inhibitor</note>
    </ligand>
</feature>
<feature type="binding site" evidence="1">
    <location>
        <position position="222"/>
    </location>
    <ligand>
        <name>UTP</name>
        <dbReference type="ChEBI" id="CHEBI:46398"/>
    </ligand>
</feature>
<feature type="binding site" evidence="1">
    <location>
        <position position="353"/>
    </location>
    <ligand>
        <name>L-glutamine</name>
        <dbReference type="ChEBI" id="CHEBI:58359"/>
    </ligand>
</feature>
<feature type="binding site" evidence="1">
    <location>
        <begin position="381"/>
        <end position="384"/>
    </location>
    <ligand>
        <name>L-glutamine</name>
        <dbReference type="ChEBI" id="CHEBI:58359"/>
    </ligand>
</feature>
<feature type="binding site" evidence="1">
    <location>
        <position position="404"/>
    </location>
    <ligand>
        <name>L-glutamine</name>
        <dbReference type="ChEBI" id="CHEBI:58359"/>
    </ligand>
</feature>
<feature type="binding site" evidence="1">
    <location>
        <position position="469"/>
    </location>
    <ligand>
        <name>L-glutamine</name>
        <dbReference type="ChEBI" id="CHEBI:58359"/>
    </ligand>
</feature>
<gene>
    <name evidence="1" type="primary">pyrG</name>
    <name type="ordered locus">Meso_1634</name>
</gene>
<protein>
    <recommendedName>
        <fullName evidence="1">CTP synthase</fullName>
        <ecNumber evidence="1">6.3.4.2</ecNumber>
    </recommendedName>
    <alternativeName>
        <fullName evidence="1">Cytidine 5'-triphosphate synthase</fullName>
    </alternativeName>
    <alternativeName>
        <fullName evidence="1">Cytidine triphosphate synthetase</fullName>
        <shortName evidence="1">CTP synthetase</shortName>
        <shortName evidence="1">CTPS</shortName>
    </alternativeName>
    <alternativeName>
        <fullName evidence="1">UTP--ammonia ligase</fullName>
    </alternativeName>
</protein>
<proteinExistence type="inferred from homology"/>
<keyword id="KW-0067">ATP-binding</keyword>
<keyword id="KW-0315">Glutamine amidotransferase</keyword>
<keyword id="KW-0436">Ligase</keyword>
<keyword id="KW-0460">Magnesium</keyword>
<keyword id="KW-0479">Metal-binding</keyword>
<keyword id="KW-0547">Nucleotide-binding</keyword>
<keyword id="KW-0665">Pyrimidine biosynthesis</keyword>
<comment type="function">
    <text evidence="1">Catalyzes the ATP-dependent amination of UTP to CTP with either L-glutamine or ammonia as the source of nitrogen. Regulates intracellular CTP levels through interactions with the four ribonucleotide triphosphates.</text>
</comment>
<comment type="catalytic activity">
    <reaction evidence="1">
        <text>UTP + L-glutamine + ATP + H2O = CTP + L-glutamate + ADP + phosphate + 2 H(+)</text>
        <dbReference type="Rhea" id="RHEA:26426"/>
        <dbReference type="ChEBI" id="CHEBI:15377"/>
        <dbReference type="ChEBI" id="CHEBI:15378"/>
        <dbReference type="ChEBI" id="CHEBI:29985"/>
        <dbReference type="ChEBI" id="CHEBI:30616"/>
        <dbReference type="ChEBI" id="CHEBI:37563"/>
        <dbReference type="ChEBI" id="CHEBI:43474"/>
        <dbReference type="ChEBI" id="CHEBI:46398"/>
        <dbReference type="ChEBI" id="CHEBI:58359"/>
        <dbReference type="ChEBI" id="CHEBI:456216"/>
        <dbReference type="EC" id="6.3.4.2"/>
    </reaction>
</comment>
<comment type="catalytic activity">
    <reaction evidence="1">
        <text>L-glutamine + H2O = L-glutamate + NH4(+)</text>
        <dbReference type="Rhea" id="RHEA:15889"/>
        <dbReference type="ChEBI" id="CHEBI:15377"/>
        <dbReference type="ChEBI" id="CHEBI:28938"/>
        <dbReference type="ChEBI" id="CHEBI:29985"/>
        <dbReference type="ChEBI" id="CHEBI:58359"/>
    </reaction>
</comment>
<comment type="catalytic activity">
    <reaction evidence="1">
        <text>UTP + NH4(+) + ATP = CTP + ADP + phosphate + 2 H(+)</text>
        <dbReference type="Rhea" id="RHEA:16597"/>
        <dbReference type="ChEBI" id="CHEBI:15378"/>
        <dbReference type="ChEBI" id="CHEBI:28938"/>
        <dbReference type="ChEBI" id="CHEBI:30616"/>
        <dbReference type="ChEBI" id="CHEBI:37563"/>
        <dbReference type="ChEBI" id="CHEBI:43474"/>
        <dbReference type="ChEBI" id="CHEBI:46398"/>
        <dbReference type="ChEBI" id="CHEBI:456216"/>
    </reaction>
</comment>
<comment type="activity regulation">
    <text evidence="1">Allosterically activated by GTP, when glutamine is the substrate; GTP has no effect on the reaction when ammonia is the substrate. The allosteric effector GTP functions by stabilizing the protein conformation that binds the tetrahedral intermediate(s) formed during glutamine hydrolysis. Inhibited by the product CTP, via allosteric rather than competitive inhibition.</text>
</comment>
<comment type="pathway">
    <text evidence="1">Pyrimidine metabolism; CTP biosynthesis via de novo pathway; CTP from UDP: step 2/2.</text>
</comment>
<comment type="subunit">
    <text evidence="1">Homotetramer.</text>
</comment>
<comment type="miscellaneous">
    <text evidence="1">CTPSs have evolved a hybrid strategy for distinguishing between UTP and CTP. The overlapping regions of the product feedback inhibitory and substrate sites recognize a common feature in both compounds, the triphosphate moiety. To differentiate isosteric substrate and product pyrimidine rings, an additional pocket far from the expected kinase/ligase catalytic site, specifically recognizes the cytosine and ribose portions of the product inhibitor.</text>
</comment>
<comment type="similarity">
    <text evidence="1">Belongs to the CTP synthase family.</text>
</comment>
<comment type="sequence caution" evidence="2">
    <conflict type="erroneous initiation">
        <sequence resource="EMBL-CDS" id="ABG63029"/>
    </conflict>
</comment>
<organism>
    <name type="scientific">Chelativorans sp. (strain BNC1)</name>
    <dbReference type="NCBI Taxonomy" id="266779"/>
    <lineage>
        <taxon>Bacteria</taxon>
        <taxon>Pseudomonadati</taxon>
        <taxon>Pseudomonadota</taxon>
        <taxon>Alphaproteobacteria</taxon>
        <taxon>Hyphomicrobiales</taxon>
        <taxon>Phyllobacteriaceae</taxon>
        <taxon>Chelativorans</taxon>
    </lineage>
</organism>
<reference key="1">
    <citation type="submission" date="2006-06" db="EMBL/GenBank/DDBJ databases">
        <title>Complete sequence of chromosome of Mesorhizobium sp. BNC1.</title>
        <authorList>
            <consortium name="US DOE Joint Genome Institute"/>
            <person name="Copeland A."/>
            <person name="Lucas S."/>
            <person name="Lapidus A."/>
            <person name="Barry K."/>
            <person name="Detter J.C."/>
            <person name="Glavina del Rio T."/>
            <person name="Hammon N."/>
            <person name="Israni S."/>
            <person name="Dalin E."/>
            <person name="Tice H."/>
            <person name="Pitluck S."/>
            <person name="Chertkov O."/>
            <person name="Brettin T."/>
            <person name="Bruce D."/>
            <person name="Han C."/>
            <person name="Tapia R."/>
            <person name="Gilna P."/>
            <person name="Schmutz J."/>
            <person name="Larimer F."/>
            <person name="Land M."/>
            <person name="Hauser L."/>
            <person name="Kyrpides N."/>
            <person name="Mikhailova N."/>
            <person name="Richardson P."/>
        </authorList>
    </citation>
    <scope>NUCLEOTIDE SEQUENCE [LARGE SCALE GENOMIC DNA]</scope>
    <source>
        <strain>BNC1</strain>
    </source>
</reference>
<accession>Q11HU6</accession>
<sequence>MARYVFITGGVVSSLGKGIASAALGALLQARGYRVRLRKLDPYLNVDPGTMSPYQHGEVFVTDDGAETDLDLGHYERFTGRSANKRDNITTGRIYQNIIEKERRGDYLGATVQVIPHVTDEIKQFVLEGNEEFDFVLCEIGGTVGDIEAMPFLEAIRQLGNELPRGNAVYIHLTLMPWIPAAGELKTKPTQHSVKELRSIGIAPDILLVRADRPVPPEERRKLSLFCNVRESAVIQALDVAHIYDVPMAYHKEGLDSEVLAAFGIDPAPKPRMERWEEVSNRIHNPEGEVTIAIVGKYTGLKDAYKSLNEALTHGGIANRVRVKLDWIESEIFEKEDPAPWLEKVHGILVPGGFGERGSEGKILAAKFARERKVPYFGICFGMQMACIEAARSLAGIEKASSTEFGPTKEPVVGLMTEWLRGNMLEKRTAAGDLGGTMRLGAYEARLQPGSKIAEIYGSEEISERHRHRYEVNIGYREKLEACGLVFAGLSPDGVLPETIEYPDHPWFVGVQYHPELKSRPFEPHPLFASFIAAAVEQSRLV</sequence>
<dbReference type="EC" id="6.3.4.2" evidence="1"/>
<dbReference type="EMBL" id="CP000390">
    <property type="protein sequence ID" value="ABG63029.1"/>
    <property type="status" value="ALT_INIT"/>
    <property type="molecule type" value="Genomic_DNA"/>
</dbReference>
<dbReference type="SMR" id="Q11HU6"/>
<dbReference type="STRING" id="266779.Meso_1634"/>
<dbReference type="MEROPS" id="C26.964"/>
<dbReference type="KEGG" id="mes:Meso_1634"/>
<dbReference type="eggNOG" id="COG0504">
    <property type="taxonomic scope" value="Bacteria"/>
</dbReference>
<dbReference type="HOGENOM" id="CLU_011675_5_0_5"/>
<dbReference type="UniPathway" id="UPA00159">
    <property type="reaction ID" value="UER00277"/>
</dbReference>
<dbReference type="GO" id="GO:0005829">
    <property type="term" value="C:cytosol"/>
    <property type="evidence" value="ECO:0007669"/>
    <property type="project" value="TreeGrafter"/>
</dbReference>
<dbReference type="GO" id="GO:0005524">
    <property type="term" value="F:ATP binding"/>
    <property type="evidence" value="ECO:0007669"/>
    <property type="project" value="UniProtKB-KW"/>
</dbReference>
<dbReference type="GO" id="GO:0003883">
    <property type="term" value="F:CTP synthase activity"/>
    <property type="evidence" value="ECO:0007669"/>
    <property type="project" value="UniProtKB-UniRule"/>
</dbReference>
<dbReference type="GO" id="GO:0004359">
    <property type="term" value="F:glutaminase activity"/>
    <property type="evidence" value="ECO:0007669"/>
    <property type="project" value="RHEA"/>
</dbReference>
<dbReference type="GO" id="GO:0042802">
    <property type="term" value="F:identical protein binding"/>
    <property type="evidence" value="ECO:0007669"/>
    <property type="project" value="TreeGrafter"/>
</dbReference>
<dbReference type="GO" id="GO:0046872">
    <property type="term" value="F:metal ion binding"/>
    <property type="evidence" value="ECO:0007669"/>
    <property type="project" value="UniProtKB-KW"/>
</dbReference>
<dbReference type="GO" id="GO:0044210">
    <property type="term" value="P:'de novo' CTP biosynthetic process"/>
    <property type="evidence" value="ECO:0007669"/>
    <property type="project" value="UniProtKB-UniRule"/>
</dbReference>
<dbReference type="GO" id="GO:0019856">
    <property type="term" value="P:pyrimidine nucleobase biosynthetic process"/>
    <property type="evidence" value="ECO:0007669"/>
    <property type="project" value="TreeGrafter"/>
</dbReference>
<dbReference type="CDD" id="cd03113">
    <property type="entry name" value="CTPS_N"/>
    <property type="match status" value="1"/>
</dbReference>
<dbReference type="CDD" id="cd01746">
    <property type="entry name" value="GATase1_CTP_Synthase"/>
    <property type="match status" value="1"/>
</dbReference>
<dbReference type="FunFam" id="3.40.50.300:FF:000009">
    <property type="entry name" value="CTP synthase"/>
    <property type="match status" value="1"/>
</dbReference>
<dbReference type="FunFam" id="3.40.50.880:FF:000002">
    <property type="entry name" value="CTP synthase"/>
    <property type="match status" value="1"/>
</dbReference>
<dbReference type="Gene3D" id="3.40.50.880">
    <property type="match status" value="1"/>
</dbReference>
<dbReference type="Gene3D" id="3.40.50.300">
    <property type="entry name" value="P-loop containing nucleotide triphosphate hydrolases"/>
    <property type="match status" value="1"/>
</dbReference>
<dbReference type="HAMAP" id="MF_01227">
    <property type="entry name" value="PyrG"/>
    <property type="match status" value="1"/>
</dbReference>
<dbReference type="InterPro" id="IPR029062">
    <property type="entry name" value="Class_I_gatase-like"/>
</dbReference>
<dbReference type="InterPro" id="IPR004468">
    <property type="entry name" value="CTP_synthase"/>
</dbReference>
<dbReference type="InterPro" id="IPR017456">
    <property type="entry name" value="CTP_synthase_N"/>
</dbReference>
<dbReference type="InterPro" id="IPR017926">
    <property type="entry name" value="GATASE"/>
</dbReference>
<dbReference type="InterPro" id="IPR033828">
    <property type="entry name" value="GATase1_CTP_Synthase"/>
</dbReference>
<dbReference type="InterPro" id="IPR027417">
    <property type="entry name" value="P-loop_NTPase"/>
</dbReference>
<dbReference type="NCBIfam" id="NF003792">
    <property type="entry name" value="PRK05380.1"/>
    <property type="match status" value="1"/>
</dbReference>
<dbReference type="NCBIfam" id="TIGR00337">
    <property type="entry name" value="PyrG"/>
    <property type="match status" value="1"/>
</dbReference>
<dbReference type="PANTHER" id="PTHR11550">
    <property type="entry name" value="CTP SYNTHASE"/>
    <property type="match status" value="1"/>
</dbReference>
<dbReference type="PANTHER" id="PTHR11550:SF0">
    <property type="entry name" value="CTP SYNTHASE-RELATED"/>
    <property type="match status" value="1"/>
</dbReference>
<dbReference type="Pfam" id="PF06418">
    <property type="entry name" value="CTP_synth_N"/>
    <property type="match status" value="1"/>
</dbReference>
<dbReference type="Pfam" id="PF00117">
    <property type="entry name" value="GATase"/>
    <property type="match status" value="1"/>
</dbReference>
<dbReference type="SUPFAM" id="SSF52317">
    <property type="entry name" value="Class I glutamine amidotransferase-like"/>
    <property type="match status" value="1"/>
</dbReference>
<dbReference type="SUPFAM" id="SSF52540">
    <property type="entry name" value="P-loop containing nucleoside triphosphate hydrolases"/>
    <property type="match status" value="1"/>
</dbReference>
<dbReference type="PROSITE" id="PS51273">
    <property type="entry name" value="GATASE_TYPE_1"/>
    <property type="match status" value="1"/>
</dbReference>
<name>PYRG_CHESB</name>